<organism>
    <name type="scientific">Schizosaccharomyces pombe (strain 972 / ATCC 24843)</name>
    <name type="common">Fission yeast</name>
    <dbReference type="NCBI Taxonomy" id="284812"/>
    <lineage>
        <taxon>Eukaryota</taxon>
        <taxon>Fungi</taxon>
        <taxon>Dikarya</taxon>
        <taxon>Ascomycota</taxon>
        <taxon>Taphrinomycotina</taxon>
        <taxon>Schizosaccharomycetes</taxon>
        <taxon>Schizosaccharomycetales</taxon>
        <taxon>Schizosaccharomycetaceae</taxon>
        <taxon>Schizosaccharomyces</taxon>
    </lineage>
</organism>
<protein>
    <recommendedName>
        <fullName>Ribulose-phosphate 3-epimerase</fullName>
        <ecNumber evidence="2">5.1.3.1</ecNumber>
    </recommendedName>
    <alternativeName>
        <fullName>Pentose-5-phosphate 3-epimerase</fullName>
        <shortName>PPE</shortName>
    </alternativeName>
    <alternativeName>
        <fullName>RPE</fullName>
    </alternativeName>
</protein>
<name>RPE_SCHPO</name>
<evidence type="ECO:0000250" key="1">
    <source>
        <dbReference type="UniProtKB" id="P32719"/>
    </source>
</evidence>
<evidence type="ECO:0000250" key="2">
    <source>
        <dbReference type="UniProtKB" id="Q96AT9"/>
    </source>
</evidence>
<evidence type="ECO:0000305" key="3"/>
<sequence>MVQAKIAPSLLAGDFANLEKEVGRMLKYGSDWLHVDVMDAQFVPNLTIGPIVVKAMRNHYTKEEAFFDCHLMVIEPERYIDQLADAGASLFCFHYEATEKHEEIISRAHEKGMLVGCALKPKTPVEVILPFVEKLDMVLVMTVEPGKGGQSFMPECLPKVEFLRKKYPTLNVEVDGGLSLKTVDAAADAGANVIVAGTAVFHAQSPEEVISGLRNSVMKAQETKPWFK</sequence>
<feature type="chain" id="PRO_0000171594" description="Ribulose-phosphate 3-epimerase">
    <location>
        <begin position="1"/>
        <end position="228"/>
    </location>
</feature>
<feature type="active site" description="Proton acceptor" evidence="1">
    <location>
        <position position="36"/>
    </location>
</feature>
<feature type="active site" description="Proton donor" evidence="1">
    <location>
        <position position="175"/>
    </location>
</feature>
<feature type="binding site" evidence="1">
    <location>
        <position position="9"/>
    </location>
    <ligand>
        <name>substrate</name>
    </ligand>
</feature>
<feature type="binding site" evidence="1">
    <location>
        <position position="34"/>
    </location>
    <ligand>
        <name>a divalent metal cation</name>
        <dbReference type="ChEBI" id="CHEBI:60240"/>
    </ligand>
</feature>
<feature type="binding site" evidence="1">
    <location>
        <position position="36"/>
    </location>
    <ligand>
        <name>a divalent metal cation</name>
        <dbReference type="ChEBI" id="CHEBI:60240"/>
    </ligand>
</feature>
<feature type="binding site" evidence="1">
    <location>
        <position position="70"/>
    </location>
    <ligand>
        <name>a divalent metal cation</name>
        <dbReference type="ChEBI" id="CHEBI:60240"/>
    </ligand>
</feature>
<feature type="binding site" evidence="1">
    <location>
        <position position="70"/>
    </location>
    <ligand>
        <name>substrate</name>
    </ligand>
</feature>
<feature type="binding site" evidence="1">
    <location>
        <begin position="146"/>
        <end position="149"/>
    </location>
    <ligand>
        <name>substrate</name>
    </ligand>
</feature>
<feature type="binding site" evidence="1">
    <location>
        <begin position="175"/>
        <end position="177"/>
    </location>
    <ligand>
        <name>substrate</name>
    </ligand>
</feature>
<feature type="binding site" evidence="1">
    <location>
        <position position="175"/>
    </location>
    <ligand>
        <name>a divalent metal cation</name>
        <dbReference type="ChEBI" id="CHEBI:60240"/>
    </ligand>
</feature>
<feature type="binding site" evidence="1">
    <location>
        <begin position="197"/>
        <end position="198"/>
    </location>
    <ligand>
        <name>substrate</name>
    </ligand>
</feature>
<accession>O14105</accession>
<dbReference type="EC" id="5.1.3.1" evidence="2"/>
<dbReference type="EMBL" id="CU329670">
    <property type="protein sequence ID" value="CAB11689.1"/>
    <property type="molecule type" value="Genomic_DNA"/>
</dbReference>
<dbReference type="PIR" id="T38622">
    <property type="entry name" value="T38622"/>
</dbReference>
<dbReference type="SMR" id="O14105"/>
<dbReference type="FunCoup" id="O14105">
    <property type="interactions" value="597"/>
</dbReference>
<dbReference type="STRING" id="284812.O14105"/>
<dbReference type="iPTMnet" id="O14105"/>
<dbReference type="PaxDb" id="4896-SPAC31G5.05c.1"/>
<dbReference type="EnsemblFungi" id="SPAC31G5.05c.1">
    <property type="protein sequence ID" value="SPAC31G5.05c.1:pep"/>
    <property type="gene ID" value="SPAC31G5.05c"/>
</dbReference>
<dbReference type="KEGG" id="spo:2543174"/>
<dbReference type="PomBase" id="SPAC31G5.05c"/>
<dbReference type="VEuPathDB" id="FungiDB:SPAC31G5.05c"/>
<dbReference type="eggNOG" id="KOG3111">
    <property type="taxonomic scope" value="Eukaryota"/>
</dbReference>
<dbReference type="HOGENOM" id="CLU_054856_0_1_1"/>
<dbReference type="InParanoid" id="O14105"/>
<dbReference type="OMA" id="CHLMIED"/>
<dbReference type="PhylomeDB" id="O14105"/>
<dbReference type="Reactome" id="R-SPO-71336">
    <property type="pathway name" value="Pentose phosphate pathway"/>
</dbReference>
<dbReference type="UniPathway" id="UPA00115">
    <property type="reaction ID" value="UER00411"/>
</dbReference>
<dbReference type="PRO" id="PR:O14105"/>
<dbReference type="Proteomes" id="UP000002485">
    <property type="component" value="Chromosome I"/>
</dbReference>
<dbReference type="GO" id="GO:0005829">
    <property type="term" value="C:cytosol"/>
    <property type="evidence" value="ECO:0007005"/>
    <property type="project" value="PomBase"/>
</dbReference>
<dbReference type="GO" id="GO:0005634">
    <property type="term" value="C:nucleus"/>
    <property type="evidence" value="ECO:0007005"/>
    <property type="project" value="PomBase"/>
</dbReference>
<dbReference type="GO" id="GO:0004750">
    <property type="term" value="F:D-ribulose-phosphate 3-epimerase activity"/>
    <property type="evidence" value="ECO:0000269"/>
    <property type="project" value="PomBase"/>
</dbReference>
<dbReference type="GO" id="GO:0046872">
    <property type="term" value="F:metal ion binding"/>
    <property type="evidence" value="ECO:0000318"/>
    <property type="project" value="GO_Central"/>
</dbReference>
<dbReference type="GO" id="GO:0005975">
    <property type="term" value="P:carbohydrate metabolic process"/>
    <property type="evidence" value="ECO:0000318"/>
    <property type="project" value="GO_Central"/>
</dbReference>
<dbReference type="GO" id="GO:0009052">
    <property type="term" value="P:pentose-phosphate shunt, non-oxidative branch"/>
    <property type="evidence" value="ECO:0000269"/>
    <property type="project" value="PomBase"/>
</dbReference>
<dbReference type="CDD" id="cd00429">
    <property type="entry name" value="RPE"/>
    <property type="match status" value="1"/>
</dbReference>
<dbReference type="FunFam" id="3.20.20.70:FF:000171">
    <property type="entry name" value="Ribulose-phosphate 3-epimerase"/>
    <property type="match status" value="1"/>
</dbReference>
<dbReference type="Gene3D" id="3.20.20.70">
    <property type="entry name" value="Aldolase class I"/>
    <property type="match status" value="1"/>
</dbReference>
<dbReference type="HAMAP" id="MF_02227">
    <property type="entry name" value="RPE"/>
    <property type="match status" value="1"/>
</dbReference>
<dbReference type="InterPro" id="IPR013785">
    <property type="entry name" value="Aldolase_TIM"/>
</dbReference>
<dbReference type="InterPro" id="IPR026019">
    <property type="entry name" value="Ribul_P_3_epim"/>
</dbReference>
<dbReference type="InterPro" id="IPR000056">
    <property type="entry name" value="Ribul_P_3_epim-like"/>
</dbReference>
<dbReference type="InterPro" id="IPR011060">
    <property type="entry name" value="RibuloseP-bd_barrel"/>
</dbReference>
<dbReference type="NCBIfam" id="NF004076">
    <property type="entry name" value="PRK05581.1-4"/>
    <property type="match status" value="1"/>
</dbReference>
<dbReference type="NCBIfam" id="TIGR01163">
    <property type="entry name" value="rpe"/>
    <property type="match status" value="1"/>
</dbReference>
<dbReference type="PANTHER" id="PTHR11749">
    <property type="entry name" value="RIBULOSE-5-PHOSPHATE-3-EPIMERASE"/>
    <property type="match status" value="1"/>
</dbReference>
<dbReference type="Pfam" id="PF00834">
    <property type="entry name" value="Ribul_P_3_epim"/>
    <property type="match status" value="1"/>
</dbReference>
<dbReference type="PIRSF" id="PIRSF001461">
    <property type="entry name" value="RPE"/>
    <property type="match status" value="1"/>
</dbReference>
<dbReference type="SUPFAM" id="SSF51366">
    <property type="entry name" value="Ribulose-phoshate binding barrel"/>
    <property type="match status" value="1"/>
</dbReference>
<dbReference type="PROSITE" id="PS01085">
    <property type="entry name" value="RIBUL_P_3_EPIMER_1"/>
    <property type="match status" value="1"/>
</dbReference>
<dbReference type="PROSITE" id="PS01086">
    <property type="entry name" value="RIBUL_P_3_EPIMER_2"/>
    <property type="match status" value="1"/>
</dbReference>
<gene>
    <name type="ORF">SPAC31G5.05c</name>
</gene>
<proteinExistence type="inferred from homology"/>
<keyword id="KW-0119">Carbohydrate metabolism</keyword>
<keyword id="KW-0170">Cobalt</keyword>
<keyword id="KW-0408">Iron</keyword>
<keyword id="KW-0413">Isomerase</keyword>
<keyword id="KW-0464">Manganese</keyword>
<keyword id="KW-0479">Metal-binding</keyword>
<keyword id="KW-1185">Reference proteome</keyword>
<keyword id="KW-0862">Zinc</keyword>
<reference key="1">
    <citation type="journal article" date="2002" name="Nature">
        <title>The genome sequence of Schizosaccharomyces pombe.</title>
        <authorList>
            <person name="Wood V."/>
            <person name="Gwilliam R."/>
            <person name="Rajandream M.A."/>
            <person name="Lyne M.H."/>
            <person name="Lyne R."/>
            <person name="Stewart A."/>
            <person name="Sgouros J.G."/>
            <person name="Peat N."/>
            <person name="Hayles J."/>
            <person name="Baker S.G."/>
            <person name="Basham D."/>
            <person name="Bowman S."/>
            <person name="Brooks K."/>
            <person name="Brown D."/>
            <person name="Brown S."/>
            <person name="Chillingworth T."/>
            <person name="Churcher C.M."/>
            <person name="Collins M."/>
            <person name="Connor R."/>
            <person name="Cronin A."/>
            <person name="Davis P."/>
            <person name="Feltwell T."/>
            <person name="Fraser A."/>
            <person name="Gentles S."/>
            <person name="Goble A."/>
            <person name="Hamlin N."/>
            <person name="Harris D.E."/>
            <person name="Hidalgo J."/>
            <person name="Hodgson G."/>
            <person name="Holroyd S."/>
            <person name="Hornsby T."/>
            <person name="Howarth S."/>
            <person name="Huckle E.J."/>
            <person name="Hunt S."/>
            <person name="Jagels K."/>
            <person name="James K.D."/>
            <person name="Jones L."/>
            <person name="Jones M."/>
            <person name="Leather S."/>
            <person name="McDonald S."/>
            <person name="McLean J."/>
            <person name="Mooney P."/>
            <person name="Moule S."/>
            <person name="Mungall K.L."/>
            <person name="Murphy L.D."/>
            <person name="Niblett D."/>
            <person name="Odell C."/>
            <person name="Oliver K."/>
            <person name="O'Neil S."/>
            <person name="Pearson D."/>
            <person name="Quail M.A."/>
            <person name="Rabbinowitsch E."/>
            <person name="Rutherford K.M."/>
            <person name="Rutter S."/>
            <person name="Saunders D."/>
            <person name="Seeger K."/>
            <person name="Sharp S."/>
            <person name="Skelton J."/>
            <person name="Simmonds M.N."/>
            <person name="Squares R."/>
            <person name="Squares S."/>
            <person name="Stevens K."/>
            <person name="Taylor K."/>
            <person name="Taylor R.G."/>
            <person name="Tivey A."/>
            <person name="Walsh S.V."/>
            <person name="Warren T."/>
            <person name="Whitehead S."/>
            <person name="Woodward J.R."/>
            <person name="Volckaert G."/>
            <person name="Aert R."/>
            <person name="Robben J."/>
            <person name="Grymonprez B."/>
            <person name="Weltjens I."/>
            <person name="Vanstreels E."/>
            <person name="Rieger M."/>
            <person name="Schaefer M."/>
            <person name="Mueller-Auer S."/>
            <person name="Gabel C."/>
            <person name="Fuchs M."/>
            <person name="Duesterhoeft A."/>
            <person name="Fritzc C."/>
            <person name="Holzer E."/>
            <person name="Moestl D."/>
            <person name="Hilbert H."/>
            <person name="Borzym K."/>
            <person name="Langer I."/>
            <person name="Beck A."/>
            <person name="Lehrach H."/>
            <person name="Reinhardt R."/>
            <person name="Pohl T.M."/>
            <person name="Eger P."/>
            <person name="Zimmermann W."/>
            <person name="Wedler H."/>
            <person name="Wambutt R."/>
            <person name="Purnelle B."/>
            <person name="Goffeau A."/>
            <person name="Cadieu E."/>
            <person name="Dreano S."/>
            <person name="Gloux S."/>
            <person name="Lelaure V."/>
            <person name="Mottier S."/>
            <person name="Galibert F."/>
            <person name="Aves S.J."/>
            <person name="Xiang Z."/>
            <person name="Hunt C."/>
            <person name="Moore K."/>
            <person name="Hurst S.M."/>
            <person name="Lucas M."/>
            <person name="Rochet M."/>
            <person name="Gaillardin C."/>
            <person name="Tallada V.A."/>
            <person name="Garzon A."/>
            <person name="Thode G."/>
            <person name="Daga R.R."/>
            <person name="Cruzado L."/>
            <person name="Jimenez J."/>
            <person name="Sanchez M."/>
            <person name="del Rey F."/>
            <person name="Benito J."/>
            <person name="Dominguez A."/>
            <person name="Revuelta J.L."/>
            <person name="Moreno S."/>
            <person name="Armstrong J."/>
            <person name="Forsburg S.L."/>
            <person name="Cerutti L."/>
            <person name="Lowe T."/>
            <person name="McCombie W.R."/>
            <person name="Paulsen I."/>
            <person name="Potashkin J."/>
            <person name="Shpakovski G.V."/>
            <person name="Ussery D."/>
            <person name="Barrell B.G."/>
            <person name="Nurse P."/>
        </authorList>
    </citation>
    <scope>NUCLEOTIDE SEQUENCE [LARGE SCALE GENOMIC DNA]</scope>
    <source>
        <strain>972 / ATCC 24843</strain>
    </source>
</reference>
<comment type="function">
    <text evidence="2">Catalyzes the reversible epimerization of D-ribulose 5-phosphate to D-xylulose 5-phosphate.</text>
</comment>
<comment type="catalytic activity">
    <reaction evidence="2">
        <text>D-ribulose 5-phosphate = D-xylulose 5-phosphate</text>
        <dbReference type="Rhea" id="RHEA:13677"/>
        <dbReference type="ChEBI" id="CHEBI:57737"/>
        <dbReference type="ChEBI" id="CHEBI:58121"/>
        <dbReference type="EC" id="5.1.3.1"/>
    </reaction>
</comment>
<comment type="cofactor">
    <cofactor evidence="2">
        <name>Co(2+)</name>
        <dbReference type="ChEBI" id="CHEBI:48828"/>
    </cofactor>
    <cofactor evidence="2">
        <name>Fe(2+)</name>
        <dbReference type="ChEBI" id="CHEBI:29033"/>
    </cofactor>
    <cofactor evidence="2">
        <name>Mn(2+)</name>
        <dbReference type="ChEBI" id="CHEBI:29035"/>
    </cofactor>
    <cofactor evidence="2">
        <name>Zn(2+)</name>
        <dbReference type="ChEBI" id="CHEBI:29105"/>
    </cofactor>
    <text evidence="2">Binds 1 divalent metal cation per subunit. Active with Co(2+), Fe(2+), Mn(2+) and Zn(2+).</text>
</comment>
<comment type="pathway">
    <text>Carbohydrate degradation; pentose phosphate pathway; D-xylulose 5-phosphate from D-ribulose 5-phosphate (non-oxidative stage): step 1/1.</text>
</comment>
<comment type="similarity">
    <text evidence="3">Belongs to the ribulose-phosphate 3-epimerase family.</text>
</comment>